<organism>
    <name type="scientific">Drosophila erecta</name>
    <name type="common">Fruit fly</name>
    <dbReference type="NCBI Taxonomy" id="7220"/>
    <lineage>
        <taxon>Eukaryota</taxon>
        <taxon>Metazoa</taxon>
        <taxon>Ecdysozoa</taxon>
        <taxon>Arthropoda</taxon>
        <taxon>Hexapoda</taxon>
        <taxon>Insecta</taxon>
        <taxon>Pterygota</taxon>
        <taxon>Neoptera</taxon>
        <taxon>Endopterygota</taxon>
        <taxon>Diptera</taxon>
        <taxon>Brachycera</taxon>
        <taxon>Muscomorpha</taxon>
        <taxon>Ephydroidea</taxon>
        <taxon>Drosophilidae</taxon>
        <taxon>Drosophila</taxon>
        <taxon>Sophophora</taxon>
    </lineage>
</organism>
<feature type="chain" id="PRO_0000383934" description="Queuine tRNA-ribosyltransferase accessory subunit 2">
    <location>
        <begin position="1"/>
        <end position="418"/>
    </location>
</feature>
<feature type="binding site" evidence="1">
    <location>
        <position position="325"/>
    </location>
    <ligand>
        <name>Zn(2+)</name>
        <dbReference type="ChEBI" id="CHEBI:29105"/>
    </ligand>
</feature>
<feature type="binding site" evidence="1">
    <location>
        <position position="327"/>
    </location>
    <ligand>
        <name>Zn(2+)</name>
        <dbReference type="ChEBI" id="CHEBI:29105"/>
    </ligand>
</feature>
<feature type="binding site" evidence="1">
    <location>
        <position position="330"/>
    </location>
    <ligand>
        <name>Zn(2+)</name>
        <dbReference type="ChEBI" id="CHEBI:29105"/>
    </ligand>
</feature>
<feature type="binding site" evidence="1">
    <location>
        <position position="356"/>
    </location>
    <ligand>
        <name>Zn(2+)</name>
        <dbReference type="ChEBI" id="CHEBI:29105"/>
    </ligand>
</feature>
<proteinExistence type="inferred from homology"/>
<accession>B3NCH1</accession>
<comment type="function">
    <text evidence="1">Non-catalytic subunit of the queuine tRNA-ribosyltransferase (TGT) that catalyzes the base-exchange of a guanine (G) residue with queuine (Q) at position 34 (anticodon wobble position) in tRNAs with GU(N) anticodons (tRNA-Asp, -Asn, -His and -Tyr), resulting in the hypermodified nucleoside queuosine (7-(((4,5-cis-dihydroxy-2-cyclopenten-1-yl)amino)methyl)-7-deazaguanosine).</text>
</comment>
<comment type="cofactor">
    <cofactor evidence="1">
        <name>Zn(2+)</name>
        <dbReference type="ChEBI" id="CHEBI:29105"/>
    </cofactor>
    <text evidence="1">Binds 1 zinc ion per subunit.</text>
</comment>
<comment type="subunit">
    <text evidence="1">Heterodimer of a catalytic subunit and an accessory subunit.</text>
</comment>
<comment type="subcellular location">
    <subcellularLocation>
        <location evidence="1">Cytoplasm</location>
    </subcellularLocation>
</comment>
<comment type="similarity">
    <text evidence="1">Belongs to the queuine tRNA-ribosyltransferase family. QTRT2 subfamily.</text>
</comment>
<name>QTRT2_DROER</name>
<evidence type="ECO:0000255" key="1">
    <source>
        <dbReference type="HAMAP-Rule" id="MF_03043"/>
    </source>
</evidence>
<gene>
    <name type="ORF">GG14034</name>
</gene>
<protein>
    <recommendedName>
        <fullName evidence="1">Queuine tRNA-ribosyltransferase accessory subunit 2</fullName>
    </recommendedName>
    <alternativeName>
        <fullName evidence="1">Queuine tRNA-ribosyltransferase domain-containing protein 1</fullName>
    </alternativeName>
</protein>
<reference key="1">
    <citation type="journal article" date="2007" name="Nature">
        <title>Evolution of genes and genomes on the Drosophila phylogeny.</title>
        <authorList>
            <consortium name="Drosophila 12 genomes consortium"/>
        </authorList>
    </citation>
    <scope>NUCLEOTIDE SEQUENCE [LARGE SCALE GENOMIC DNA]</scope>
    <source>
        <strain>Tucson 14021-0224.01</strain>
    </source>
</reference>
<sequence length="418" mass="46519">MKFAIESISKNSGRLGQLRIKDGGPELKTPLLLQTTKGGSIPWLSADVFESHVSQKPQVLQFTLSTMDQMTEALTHWNSGGGNGLSGYVGLPGHLNILMVRDPCETTLSGGNDRDIMPLFTRRGKESLSSERYMEMVASFKPDIYQGLCDADTNLDSAKKRIQKSVDRTEKFMHYIYEHRCKVNSTLLAPIVGGYNTFARTQSIKHAREQPAGSYGGYIFEGFHTNGLTATTLDTSKLLPIVEHCVKQLEEDKPRILPGAYTPLTILELIRQGIDVFDSSYAYCASLNFKALTFSFVQDAVEHVPFLDITDEAIKEDFTPPLSECSCLTCQKHTRAYLHHLYKTNELLGPILLMVHNIHHYMAFFEEIRESVAKDALPQLTELVRNQNGKTQVDYSIAANNKVISKATMGKGFAAAAV</sequence>
<keyword id="KW-0963">Cytoplasm</keyword>
<keyword id="KW-0479">Metal-binding</keyword>
<keyword id="KW-0819">tRNA processing</keyword>
<keyword id="KW-0862">Zinc</keyword>
<dbReference type="EMBL" id="CH954178">
    <property type="protein sequence ID" value="EDV51201.1"/>
    <property type="molecule type" value="Genomic_DNA"/>
</dbReference>
<dbReference type="SMR" id="B3NCH1"/>
<dbReference type="EnsemblMetazoa" id="FBtr0134088">
    <property type="protein sequence ID" value="FBpp0132580"/>
    <property type="gene ID" value="FBgn0106296"/>
</dbReference>
<dbReference type="EnsemblMetazoa" id="XM_001972139.3">
    <property type="protein sequence ID" value="XP_001972175.1"/>
    <property type="gene ID" value="LOC6545822"/>
</dbReference>
<dbReference type="GeneID" id="6545822"/>
<dbReference type="KEGG" id="der:6545822"/>
<dbReference type="eggNOG" id="KOG3909">
    <property type="taxonomic scope" value="Eukaryota"/>
</dbReference>
<dbReference type="HOGENOM" id="CLU_037350_0_0_1"/>
<dbReference type="OMA" id="VPHIAHD"/>
<dbReference type="OrthoDB" id="27601at2759"/>
<dbReference type="PhylomeDB" id="B3NCH1"/>
<dbReference type="Proteomes" id="UP000008711">
    <property type="component" value="Unassembled WGS sequence"/>
</dbReference>
<dbReference type="GO" id="GO:0005737">
    <property type="term" value="C:cytoplasm"/>
    <property type="evidence" value="ECO:0007669"/>
    <property type="project" value="UniProtKB-SubCell"/>
</dbReference>
<dbReference type="GO" id="GO:0046872">
    <property type="term" value="F:metal ion binding"/>
    <property type="evidence" value="ECO:0007669"/>
    <property type="project" value="UniProtKB-KW"/>
</dbReference>
<dbReference type="GO" id="GO:0008479">
    <property type="term" value="F:tRNA-guanosine(34) queuine transglycosylase activity"/>
    <property type="evidence" value="ECO:0007669"/>
    <property type="project" value="UniProtKB-UniRule"/>
</dbReference>
<dbReference type="GO" id="GO:0101030">
    <property type="term" value="P:tRNA-guanine transglycosylation"/>
    <property type="evidence" value="ECO:0007669"/>
    <property type="project" value="UniProtKB-UniRule"/>
</dbReference>
<dbReference type="FunFam" id="3.20.20.105:FF:000008">
    <property type="entry name" value="Queuine tRNA-ribosyltransferase accessory subunit 2"/>
    <property type="match status" value="1"/>
</dbReference>
<dbReference type="Gene3D" id="3.20.20.105">
    <property type="entry name" value="Queuine tRNA-ribosyltransferase-like"/>
    <property type="match status" value="1"/>
</dbReference>
<dbReference type="HAMAP" id="MF_03043">
    <property type="entry name" value="QTRT2"/>
    <property type="match status" value="1"/>
</dbReference>
<dbReference type="InterPro" id="IPR028592">
    <property type="entry name" value="QTRTD1"/>
</dbReference>
<dbReference type="InterPro" id="IPR050852">
    <property type="entry name" value="Queuine_tRNA-ribosyltrfase"/>
</dbReference>
<dbReference type="InterPro" id="IPR036511">
    <property type="entry name" value="TGT-like_sf"/>
</dbReference>
<dbReference type="InterPro" id="IPR002616">
    <property type="entry name" value="tRNA_ribo_trans-like"/>
</dbReference>
<dbReference type="NCBIfam" id="TIGR00449">
    <property type="entry name" value="tgt_general"/>
    <property type="match status" value="1"/>
</dbReference>
<dbReference type="PANTHER" id="PTHR46064">
    <property type="entry name" value="QUEUINE TRNA-RIBOSYLTRANSFERASE ACCESSORY SUBUNIT 2"/>
    <property type="match status" value="1"/>
</dbReference>
<dbReference type="PANTHER" id="PTHR46064:SF1">
    <property type="entry name" value="QUEUINE TRNA-RIBOSYLTRANSFERASE ACCESSORY SUBUNIT 2"/>
    <property type="match status" value="1"/>
</dbReference>
<dbReference type="Pfam" id="PF01702">
    <property type="entry name" value="TGT"/>
    <property type="match status" value="1"/>
</dbReference>
<dbReference type="SUPFAM" id="SSF51713">
    <property type="entry name" value="tRNA-guanine transglycosylase"/>
    <property type="match status" value="1"/>
</dbReference>